<keyword id="KW-0378">Hydrolase</keyword>
<keyword id="KW-0460">Magnesium</keyword>
<keyword id="KW-0479">Metal-binding</keyword>
<keyword id="KW-0546">Nucleotide metabolism</keyword>
<sequence length="148" mass="16002">MTITQVKIKKLENFSGSLPEYATEHSAGMDLIAANEQPITIKAAAIQLIPTGIAIALPDSFEAQIRPRSGLAVKHGITVANSPGTIDADYRGEIKVILINLGKEDFIIEKGMRIAQMIIAKYERILWEESISLMETMRGSGGFGSTGV</sequence>
<name>DUT_RICRO</name>
<organism>
    <name type="scientific">Rickettsia rickettsii (strain Iowa)</name>
    <dbReference type="NCBI Taxonomy" id="452659"/>
    <lineage>
        <taxon>Bacteria</taxon>
        <taxon>Pseudomonadati</taxon>
        <taxon>Pseudomonadota</taxon>
        <taxon>Alphaproteobacteria</taxon>
        <taxon>Rickettsiales</taxon>
        <taxon>Rickettsiaceae</taxon>
        <taxon>Rickettsieae</taxon>
        <taxon>Rickettsia</taxon>
        <taxon>spotted fever group</taxon>
    </lineage>
</organism>
<feature type="chain" id="PRO_1000076067" description="Deoxyuridine 5'-triphosphate nucleotidohydrolase">
    <location>
        <begin position="1"/>
        <end position="148"/>
    </location>
</feature>
<feature type="binding site" evidence="1">
    <location>
        <begin position="68"/>
        <end position="70"/>
    </location>
    <ligand>
        <name>substrate</name>
    </ligand>
</feature>
<feature type="binding site" evidence="1">
    <location>
        <position position="81"/>
    </location>
    <ligand>
        <name>substrate</name>
    </ligand>
</feature>
<feature type="binding site" evidence="1">
    <location>
        <begin position="85"/>
        <end position="87"/>
    </location>
    <ligand>
        <name>substrate</name>
    </ligand>
</feature>
<feature type="binding site" evidence="1">
    <location>
        <position position="95"/>
    </location>
    <ligand>
        <name>substrate</name>
    </ligand>
</feature>
<proteinExistence type="inferred from homology"/>
<dbReference type="EC" id="3.6.1.23" evidence="1"/>
<dbReference type="EMBL" id="CP000766">
    <property type="protein sequence ID" value="ABY72517.1"/>
    <property type="molecule type" value="Genomic_DNA"/>
</dbReference>
<dbReference type="RefSeq" id="WP_012150745.1">
    <property type="nucleotide sequence ID" value="NC_010263.3"/>
</dbReference>
<dbReference type="SMR" id="B0BXE1"/>
<dbReference type="GeneID" id="79937302"/>
<dbReference type="KEGG" id="rrj:RrIowa_0653"/>
<dbReference type="eggNOG" id="COG0756">
    <property type="taxonomic scope" value="Bacteria"/>
</dbReference>
<dbReference type="HOGENOM" id="CLU_068508_1_2_5"/>
<dbReference type="UniPathway" id="UPA00610">
    <property type="reaction ID" value="UER00666"/>
</dbReference>
<dbReference type="Proteomes" id="UP000000796">
    <property type="component" value="Chromosome"/>
</dbReference>
<dbReference type="GO" id="GO:0004170">
    <property type="term" value="F:dUTP diphosphatase activity"/>
    <property type="evidence" value="ECO:0007669"/>
    <property type="project" value="UniProtKB-UniRule"/>
</dbReference>
<dbReference type="GO" id="GO:0000287">
    <property type="term" value="F:magnesium ion binding"/>
    <property type="evidence" value="ECO:0007669"/>
    <property type="project" value="UniProtKB-UniRule"/>
</dbReference>
<dbReference type="GO" id="GO:0006226">
    <property type="term" value="P:dUMP biosynthetic process"/>
    <property type="evidence" value="ECO:0007669"/>
    <property type="project" value="UniProtKB-UniRule"/>
</dbReference>
<dbReference type="GO" id="GO:0046081">
    <property type="term" value="P:dUTP catabolic process"/>
    <property type="evidence" value="ECO:0007669"/>
    <property type="project" value="InterPro"/>
</dbReference>
<dbReference type="CDD" id="cd07557">
    <property type="entry name" value="trimeric_dUTPase"/>
    <property type="match status" value="1"/>
</dbReference>
<dbReference type="FunFam" id="2.70.40.10:FF:000002">
    <property type="entry name" value="dUTP diphosphatase"/>
    <property type="match status" value="1"/>
</dbReference>
<dbReference type="Gene3D" id="2.70.40.10">
    <property type="match status" value="1"/>
</dbReference>
<dbReference type="HAMAP" id="MF_00116">
    <property type="entry name" value="dUTPase_bact"/>
    <property type="match status" value="1"/>
</dbReference>
<dbReference type="InterPro" id="IPR008181">
    <property type="entry name" value="dUTPase"/>
</dbReference>
<dbReference type="InterPro" id="IPR029054">
    <property type="entry name" value="dUTPase-like"/>
</dbReference>
<dbReference type="InterPro" id="IPR036157">
    <property type="entry name" value="dUTPase-like_sf"/>
</dbReference>
<dbReference type="InterPro" id="IPR033704">
    <property type="entry name" value="dUTPase_trimeric"/>
</dbReference>
<dbReference type="NCBIfam" id="TIGR00576">
    <property type="entry name" value="dut"/>
    <property type="match status" value="1"/>
</dbReference>
<dbReference type="NCBIfam" id="NF001862">
    <property type="entry name" value="PRK00601.1"/>
    <property type="match status" value="1"/>
</dbReference>
<dbReference type="PANTHER" id="PTHR11241">
    <property type="entry name" value="DEOXYURIDINE 5'-TRIPHOSPHATE NUCLEOTIDOHYDROLASE"/>
    <property type="match status" value="1"/>
</dbReference>
<dbReference type="PANTHER" id="PTHR11241:SF0">
    <property type="entry name" value="DEOXYURIDINE 5'-TRIPHOSPHATE NUCLEOTIDOHYDROLASE"/>
    <property type="match status" value="1"/>
</dbReference>
<dbReference type="Pfam" id="PF00692">
    <property type="entry name" value="dUTPase"/>
    <property type="match status" value="1"/>
</dbReference>
<dbReference type="SUPFAM" id="SSF51283">
    <property type="entry name" value="dUTPase-like"/>
    <property type="match status" value="1"/>
</dbReference>
<accession>B0BXE1</accession>
<comment type="function">
    <text evidence="1">This enzyme is involved in nucleotide metabolism: it produces dUMP, the immediate precursor of thymidine nucleotides and it decreases the intracellular concentration of dUTP so that uracil cannot be incorporated into DNA.</text>
</comment>
<comment type="catalytic activity">
    <reaction evidence="1">
        <text>dUTP + H2O = dUMP + diphosphate + H(+)</text>
        <dbReference type="Rhea" id="RHEA:10248"/>
        <dbReference type="ChEBI" id="CHEBI:15377"/>
        <dbReference type="ChEBI" id="CHEBI:15378"/>
        <dbReference type="ChEBI" id="CHEBI:33019"/>
        <dbReference type="ChEBI" id="CHEBI:61555"/>
        <dbReference type="ChEBI" id="CHEBI:246422"/>
        <dbReference type="EC" id="3.6.1.23"/>
    </reaction>
</comment>
<comment type="cofactor">
    <cofactor evidence="1">
        <name>Mg(2+)</name>
        <dbReference type="ChEBI" id="CHEBI:18420"/>
    </cofactor>
</comment>
<comment type="pathway">
    <text evidence="1">Pyrimidine metabolism; dUMP biosynthesis; dUMP from dCTP (dUTP route): step 2/2.</text>
</comment>
<comment type="similarity">
    <text evidence="1">Belongs to the dUTPase family.</text>
</comment>
<gene>
    <name evidence="1" type="primary">dut</name>
    <name type="ordered locus">RrIowa_0653</name>
</gene>
<protein>
    <recommendedName>
        <fullName evidence="1">Deoxyuridine 5'-triphosphate nucleotidohydrolase</fullName>
        <shortName evidence="1">dUTPase</shortName>
        <ecNumber evidence="1">3.6.1.23</ecNumber>
    </recommendedName>
    <alternativeName>
        <fullName evidence="1">dUTP pyrophosphatase</fullName>
    </alternativeName>
</protein>
<evidence type="ECO:0000255" key="1">
    <source>
        <dbReference type="HAMAP-Rule" id="MF_00116"/>
    </source>
</evidence>
<reference key="1">
    <citation type="journal article" date="2008" name="Infect. Immun.">
        <title>Genomic comparison of virulent Rickettsia rickettsii Sheila Smith and avirulent Rickettsia rickettsii Iowa.</title>
        <authorList>
            <person name="Ellison D.W."/>
            <person name="Clark T.R."/>
            <person name="Sturdevant D.E."/>
            <person name="Virtaneva K."/>
            <person name="Porcella S.F."/>
            <person name="Hackstadt T."/>
        </authorList>
    </citation>
    <scope>NUCLEOTIDE SEQUENCE [LARGE SCALE GENOMIC DNA]</scope>
    <source>
        <strain>Iowa</strain>
    </source>
</reference>